<comment type="function">
    <text evidence="1">Component of the acetyl coenzyme A carboxylase (ACC) complex. First, biotin carboxylase catalyzes the carboxylation of biotin on its carrier protein (BCCP) and then the CO(2) group is transferred by the carboxyltransferase to acetyl-CoA to form malonyl-CoA.</text>
</comment>
<comment type="catalytic activity">
    <reaction evidence="1">
        <text>N(6)-carboxybiotinyl-L-lysyl-[protein] + acetyl-CoA = N(6)-biotinyl-L-lysyl-[protein] + malonyl-CoA</text>
        <dbReference type="Rhea" id="RHEA:54728"/>
        <dbReference type="Rhea" id="RHEA-COMP:10505"/>
        <dbReference type="Rhea" id="RHEA-COMP:10506"/>
        <dbReference type="ChEBI" id="CHEBI:57288"/>
        <dbReference type="ChEBI" id="CHEBI:57384"/>
        <dbReference type="ChEBI" id="CHEBI:83144"/>
        <dbReference type="ChEBI" id="CHEBI:83145"/>
        <dbReference type="EC" id="2.1.3.15"/>
    </reaction>
</comment>
<comment type="pathway">
    <text evidence="1">Lipid metabolism; malonyl-CoA biosynthesis; malonyl-CoA from acetyl-CoA: step 1/1.</text>
</comment>
<comment type="subunit">
    <text evidence="1">Acetyl-CoA carboxylase is a heterohexamer composed of biotin carboxyl carrier protein (AccB), biotin carboxylase (AccC) and two subunits each of ACCase subunit alpha (AccA) and ACCase subunit beta (AccD).</text>
</comment>
<comment type="subcellular location">
    <subcellularLocation>
        <location evidence="1">Cytoplasm</location>
    </subcellularLocation>
</comment>
<comment type="similarity">
    <text evidence="1">Belongs to the AccA family.</text>
</comment>
<reference key="1">
    <citation type="journal article" date="2007" name="Proc. Natl. Acad. Sci. U.S.A.">
        <title>Deep-sea vent epsilon-proteobacterial genomes provide insights into emergence of pathogens.</title>
        <authorList>
            <person name="Nakagawa S."/>
            <person name="Takaki Y."/>
            <person name="Shimamura S."/>
            <person name="Reysenbach A.-L."/>
            <person name="Takai K."/>
            <person name="Horikoshi K."/>
        </authorList>
    </citation>
    <scope>NUCLEOTIDE SEQUENCE [LARGE SCALE GENOMIC DNA]</scope>
    <source>
        <strain>NBC37-1</strain>
    </source>
</reference>
<keyword id="KW-0067">ATP-binding</keyword>
<keyword id="KW-0963">Cytoplasm</keyword>
<keyword id="KW-0275">Fatty acid biosynthesis</keyword>
<keyword id="KW-0276">Fatty acid metabolism</keyword>
<keyword id="KW-0444">Lipid biosynthesis</keyword>
<keyword id="KW-0443">Lipid metabolism</keyword>
<keyword id="KW-0547">Nucleotide-binding</keyword>
<keyword id="KW-0808">Transferase</keyword>
<dbReference type="EC" id="2.1.3.15" evidence="1"/>
<dbReference type="EMBL" id="AP009179">
    <property type="protein sequence ID" value="BAF73104.1"/>
    <property type="molecule type" value="Genomic_DNA"/>
</dbReference>
<dbReference type="RefSeq" id="WP_012083934.1">
    <property type="nucleotide sequence ID" value="NC_009663.1"/>
</dbReference>
<dbReference type="SMR" id="A6QC95"/>
<dbReference type="STRING" id="387093.SUN_2164"/>
<dbReference type="KEGG" id="sun:SUN_2164"/>
<dbReference type="eggNOG" id="COG0825">
    <property type="taxonomic scope" value="Bacteria"/>
</dbReference>
<dbReference type="HOGENOM" id="CLU_015486_0_2_7"/>
<dbReference type="OrthoDB" id="9808023at2"/>
<dbReference type="UniPathway" id="UPA00655">
    <property type="reaction ID" value="UER00711"/>
</dbReference>
<dbReference type="Proteomes" id="UP000006378">
    <property type="component" value="Chromosome"/>
</dbReference>
<dbReference type="GO" id="GO:0009317">
    <property type="term" value="C:acetyl-CoA carboxylase complex"/>
    <property type="evidence" value="ECO:0007669"/>
    <property type="project" value="InterPro"/>
</dbReference>
<dbReference type="GO" id="GO:0003989">
    <property type="term" value="F:acetyl-CoA carboxylase activity"/>
    <property type="evidence" value="ECO:0007669"/>
    <property type="project" value="InterPro"/>
</dbReference>
<dbReference type="GO" id="GO:0005524">
    <property type="term" value="F:ATP binding"/>
    <property type="evidence" value="ECO:0007669"/>
    <property type="project" value="UniProtKB-KW"/>
</dbReference>
<dbReference type="GO" id="GO:0016743">
    <property type="term" value="F:carboxyl- or carbamoyltransferase activity"/>
    <property type="evidence" value="ECO:0007669"/>
    <property type="project" value="UniProtKB-UniRule"/>
</dbReference>
<dbReference type="GO" id="GO:0006633">
    <property type="term" value="P:fatty acid biosynthetic process"/>
    <property type="evidence" value="ECO:0007669"/>
    <property type="project" value="UniProtKB-KW"/>
</dbReference>
<dbReference type="GO" id="GO:2001295">
    <property type="term" value="P:malonyl-CoA biosynthetic process"/>
    <property type="evidence" value="ECO:0007669"/>
    <property type="project" value="UniProtKB-UniRule"/>
</dbReference>
<dbReference type="Gene3D" id="3.90.226.10">
    <property type="entry name" value="2-enoyl-CoA Hydratase, Chain A, domain 1"/>
    <property type="match status" value="1"/>
</dbReference>
<dbReference type="HAMAP" id="MF_00823">
    <property type="entry name" value="AcetylCoA_CT_alpha"/>
    <property type="match status" value="1"/>
</dbReference>
<dbReference type="InterPro" id="IPR001095">
    <property type="entry name" value="Acetyl_CoA_COase_a_su"/>
</dbReference>
<dbReference type="InterPro" id="IPR029045">
    <property type="entry name" value="ClpP/crotonase-like_dom_sf"/>
</dbReference>
<dbReference type="InterPro" id="IPR011763">
    <property type="entry name" value="COA_CT_C"/>
</dbReference>
<dbReference type="NCBIfam" id="TIGR00513">
    <property type="entry name" value="accA"/>
    <property type="match status" value="1"/>
</dbReference>
<dbReference type="NCBIfam" id="NF041504">
    <property type="entry name" value="AccA_sub"/>
    <property type="match status" value="1"/>
</dbReference>
<dbReference type="NCBIfam" id="NF004344">
    <property type="entry name" value="PRK05724.1"/>
    <property type="match status" value="1"/>
</dbReference>
<dbReference type="PANTHER" id="PTHR42853">
    <property type="entry name" value="ACETYL-COENZYME A CARBOXYLASE CARBOXYL TRANSFERASE SUBUNIT ALPHA"/>
    <property type="match status" value="1"/>
</dbReference>
<dbReference type="PANTHER" id="PTHR42853:SF3">
    <property type="entry name" value="ACETYL-COENZYME A CARBOXYLASE CARBOXYL TRANSFERASE SUBUNIT ALPHA, CHLOROPLASTIC"/>
    <property type="match status" value="1"/>
</dbReference>
<dbReference type="Pfam" id="PF03255">
    <property type="entry name" value="ACCA"/>
    <property type="match status" value="1"/>
</dbReference>
<dbReference type="PRINTS" id="PR01069">
    <property type="entry name" value="ACCCTRFRASEA"/>
</dbReference>
<dbReference type="SUPFAM" id="SSF52096">
    <property type="entry name" value="ClpP/crotonase"/>
    <property type="match status" value="1"/>
</dbReference>
<dbReference type="PROSITE" id="PS50989">
    <property type="entry name" value="COA_CT_CTER"/>
    <property type="match status" value="1"/>
</dbReference>
<protein>
    <recommendedName>
        <fullName evidence="1">Acetyl-coenzyme A carboxylase carboxyl transferase subunit alpha</fullName>
        <shortName evidence="1">ACCase subunit alpha</shortName>
        <shortName evidence="1">Acetyl-CoA carboxylase carboxyltransferase subunit alpha</shortName>
        <ecNumber evidence="1">2.1.3.15</ecNumber>
    </recommendedName>
</protein>
<accession>A6QC95</accession>
<organism>
    <name type="scientific">Sulfurovum sp. (strain NBC37-1)</name>
    <dbReference type="NCBI Taxonomy" id="387093"/>
    <lineage>
        <taxon>Bacteria</taxon>
        <taxon>Pseudomonadati</taxon>
        <taxon>Campylobacterota</taxon>
        <taxon>Epsilonproteobacteria</taxon>
        <taxon>Campylobacterales</taxon>
        <taxon>Sulfurovaceae</taxon>
        <taxon>Sulfurovum</taxon>
    </lineage>
</organism>
<gene>
    <name evidence="1" type="primary">accA</name>
    <name type="ordered locus">SUN_2164</name>
</gene>
<sequence length="312" mass="34752">MATYLDFESKIEKIQHEIVSAHAIANLEAVEKYQKELEKEIEKTFGSLSDYQKLQLARHPDRPYSLDYIKLLMDDAYEIHGDRAFRDDPAILCYIGWIGGQKTMLIGEQKGRGVKNKIKRNFGMPNPEGYRKALRAVRLAEKFDIPVLMLIDTPGAYPGLGAEERGQSEAIARNLFEFSATKVPMISIVIGEGGSGGALAIGVADKLAMLRYSVFAVISPEGCSAILWNDPSKVETATKALKITPSDLLEHKLVDDVLDEPLIGAHRDKVTTAEAIKTYFLESVKALRELSLDEMLDQRYKRLTAVGAYSEK</sequence>
<proteinExistence type="inferred from homology"/>
<name>ACCA_SULNB</name>
<evidence type="ECO:0000255" key="1">
    <source>
        <dbReference type="HAMAP-Rule" id="MF_00823"/>
    </source>
</evidence>
<evidence type="ECO:0000255" key="2">
    <source>
        <dbReference type="PROSITE-ProRule" id="PRU01137"/>
    </source>
</evidence>
<feature type="chain" id="PRO_1000062689" description="Acetyl-coenzyme A carboxylase carboxyl transferase subunit alpha">
    <location>
        <begin position="1"/>
        <end position="312"/>
    </location>
</feature>
<feature type="domain" description="CoA carboxyltransferase C-terminal" evidence="2">
    <location>
        <begin position="36"/>
        <end position="286"/>
    </location>
</feature>